<dbReference type="EMBL" id="AP008214">
    <property type="protein sequence ID" value="BAF23807.1"/>
    <property type="status" value="ALT_SEQ"/>
    <property type="molecule type" value="Genomic_DNA"/>
</dbReference>
<dbReference type="EMBL" id="AP014964">
    <property type="status" value="NOT_ANNOTATED_CDS"/>
    <property type="molecule type" value="Genomic_DNA"/>
</dbReference>
<dbReference type="EMBL" id="AK107904">
    <property type="status" value="NOT_ANNOTATED_CDS"/>
    <property type="molecule type" value="mRNA"/>
</dbReference>
<dbReference type="RefSeq" id="XP_015649658.1">
    <property type="nucleotide sequence ID" value="XM_015794172.1"/>
</dbReference>
<dbReference type="FunCoup" id="Q0J5F8">
    <property type="interactions" value="2"/>
</dbReference>
<dbReference type="PaxDb" id="39947-Q0J5F8"/>
<dbReference type="KEGG" id="dosa:Os08g0438100"/>
<dbReference type="eggNOG" id="ENOG502R8XM">
    <property type="taxonomic scope" value="Eukaryota"/>
</dbReference>
<dbReference type="HOGENOM" id="CLU_123565_1_1_1"/>
<dbReference type="InParanoid" id="Q0J5F8"/>
<dbReference type="OrthoDB" id="682018at2759"/>
<dbReference type="Proteomes" id="UP000000763">
    <property type="component" value="Chromosome 8"/>
</dbReference>
<dbReference type="Proteomes" id="UP000059680">
    <property type="component" value="Chromosome 8"/>
</dbReference>
<dbReference type="GO" id="GO:0005737">
    <property type="term" value="C:cytoplasm"/>
    <property type="evidence" value="ECO:0007669"/>
    <property type="project" value="UniProtKB-SubCell"/>
</dbReference>
<dbReference type="GO" id="GO:0005634">
    <property type="term" value="C:nucleus"/>
    <property type="evidence" value="ECO:0000318"/>
    <property type="project" value="GO_Central"/>
</dbReference>
<dbReference type="GO" id="GO:0003700">
    <property type="term" value="F:DNA-binding transcription factor activity"/>
    <property type="evidence" value="ECO:0000318"/>
    <property type="project" value="GO_Central"/>
</dbReference>
<dbReference type="GO" id="GO:0000976">
    <property type="term" value="F:transcription cis-regulatory region binding"/>
    <property type="evidence" value="ECO:0000318"/>
    <property type="project" value="GO_Central"/>
</dbReference>
<dbReference type="GO" id="GO:0008270">
    <property type="term" value="F:zinc ion binding"/>
    <property type="evidence" value="ECO:0007669"/>
    <property type="project" value="UniProtKB-KW"/>
</dbReference>
<dbReference type="GO" id="GO:0006355">
    <property type="term" value="P:regulation of DNA-templated transcription"/>
    <property type="evidence" value="ECO:0000318"/>
    <property type="project" value="GO_Central"/>
</dbReference>
<dbReference type="InterPro" id="IPR006456">
    <property type="entry name" value="ZF_HD_homeobox_Cys/His_dimer"/>
</dbReference>
<dbReference type="NCBIfam" id="TIGR01566">
    <property type="entry name" value="ZF_HD_prot_N"/>
    <property type="match status" value="1"/>
</dbReference>
<dbReference type="PANTHER" id="PTHR31948:SF170">
    <property type="entry name" value="MINI ZINC FINGER PROTEIN 4"/>
    <property type="match status" value="1"/>
</dbReference>
<dbReference type="PANTHER" id="PTHR31948">
    <property type="entry name" value="ZINC-FINGER HOMEODOMAIN PROTEIN 2"/>
    <property type="match status" value="1"/>
</dbReference>
<dbReference type="Pfam" id="PF04770">
    <property type="entry name" value="ZF-HD_dimer"/>
    <property type="match status" value="1"/>
</dbReference>
<dbReference type="PROSITE" id="PS51523">
    <property type="entry name" value="ZF_HD_DIMER"/>
    <property type="match status" value="1"/>
</dbReference>
<feature type="chain" id="PRO_0000426034" description="Mini zinc finger protein 4">
    <location>
        <begin position="1"/>
        <end position="124"/>
    </location>
</feature>
<feature type="zinc finger region" description="ZF-HD dimerization-type; degenerate" evidence="2">
    <location>
        <begin position="35"/>
        <end position="84"/>
    </location>
</feature>
<evidence type="ECO:0000250" key="1"/>
<evidence type="ECO:0000255" key="2">
    <source>
        <dbReference type="PROSITE-ProRule" id="PRU00856"/>
    </source>
</evidence>
<evidence type="ECO:0000305" key="3"/>
<gene>
    <name type="primary">MIF4</name>
    <name type="ordered locus">Os08g0438100</name>
    <name type="ordered locus">LOC_Os08g33990</name>
</gene>
<comment type="function">
    <text evidence="1">Inhibits zinc finger homeodomain (ZHD) transcription factors, by interacting with them to prevent both their nuclear localization and their DNA-binding properties.</text>
</comment>
<comment type="subunit">
    <text evidence="1">Homo- and heterodimers.</text>
</comment>
<comment type="subcellular location">
    <subcellularLocation>
        <location evidence="1">Cytoplasm</location>
    </subcellularLocation>
</comment>
<comment type="sequence caution" evidence="3">
    <conflict type="erroneous gene model prediction">
        <sequence resource="EMBL-CDS" id="BAF23807"/>
    </conflict>
</comment>
<organism>
    <name type="scientific">Oryza sativa subsp. japonica</name>
    <name type="common">Rice</name>
    <dbReference type="NCBI Taxonomy" id="39947"/>
    <lineage>
        <taxon>Eukaryota</taxon>
        <taxon>Viridiplantae</taxon>
        <taxon>Streptophyta</taxon>
        <taxon>Embryophyta</taxon>
        <taxon>Tracheophyta</taxon>
        <taxon>Spermatophyta</taxon>
        <taxon>Magnoliopsida</taxon>
        <taxon>Liliopsida</taxon>
        <taxon>Poales</taxon>
        <taxon>Poaceae</taxon>
        <taxon>BOP clade</taxon>
        <taxon>Oryzoideae</taxon>
        <taxon>Oryzeae</taxon>
        <taxon>Oryzinae</taxon>
        <taxon>Oryza</taxon>
        <taxon>Oryza sativa</taxon>
    </lineage>
</organism>
<sequence>MMKRMVILRRCEPPPPQPAAAVVAAMGGCCGRVRYGECRRNHAARMGGHAVDGCREFLAEGEEGTGGALRCAACGCHRSFHRRVVVVQQCCACDTAAAAAAAGGWEWRDCSPESSSSASSTTAS</sequence>
<name>MIF4_ORYSJ</name>
<keyword id="KW-0963">Cytoplasm</keyword>
<keyword id="KW-0479">Metal-binding</keyword>
<keyword id="KW-1185">Reference proteome</keyword>
<keyword id="KW-0862">Zinc</keyword>
<keyword id="KW-0863">Zinc-finger</keyword>
<protein>
    <recommendedName>
        <fullName>Mini zinc finger protein 4</fullName>
        <shortName>OsMIF4</shortName>
    </recommendedName>
</protein>
<reference key="1">
    <citation type="journal article" date="2005" name="Nature">
        <title>The map-based sequence of the rice genome.</title>
        <authorList>
            <consortium name="International rice genome sequencing project (IRGSP)"/>
        </authorList>
    </citation>
    <scope>NUCLEOTIDE SEQUENCE [LARGE SCALE GENOMIC DNA]</scope>
    <source>
        <strain>cv. Nipponbare</strain>
    </source>
</reference>
<reference key="2">
    <citation type="journal article" date="2008" name="Nucleic Acids Res.">
        <title>The rice annotation project database (RAP-DB): 2008 update.</title>
        <authorList>
            <consortium name="The rice annotation project (RAP)"/>
        </authorList>
    </citation>
    <scope>GENOME REANNOTATION</scope>
    <source>
        <strain>cv. Nipponbare</strain>
    </source>
</reference>
<reference key="3">
    <citation type="journal article" date="2013" name="Rice">
        <title>Improvement of the Oryza sativa Nipponbare reference genome using next generation sequence and optical map data.</title>
        <authorList>
            <person name="Kawahara Y."/>
            <person name="de la Bastide M."/>
            <person name="Hamilton J.P."/>
            <person name="Kanamori H."/>
            <person name="McCombie W.R."/>
            <person name="Ouyang S."/>
            <person name="Schwartz D.C."/>
            <person name="Tanaka T."/>
            <person name="Wu J."/>
            <person name="Zhou S."/>
            <person name="Childs K.L."/>
            <person name="Davidson R.M."/>
            <person name="Lin H."/>
            <person name="Quesada-Ocampo L."/>
            <person name="Vaillancourt B."/>
            <person name="Sakai H."/>
            <person name="Lee S.S."/>
            <person name="Kim J."/>
            <person name="Numa H."/>
            <person name="Itoh T."/>
            <person name="Buell C.R."/>
            <person name="Matsumoto T."/>
        </authorList>
    </citation>
    <scope>GENOME REANNOTATION</scope>
    <source>
        <strain>cv. Nipponbare</strain>
    </source>
</reference>
<reference key="4">
    <citation type="journal article" date="2003" name="Science">
        <title>Collection, mapping, and annotation of over 28,000 cDNA clones from japonica rice.</title>
        <authorList>
            <consortium name="The rice full-length cDNA consortium"/>
        </authorList>
    </citation>
    <scope>NUCLEOTIDE SEQUENCE [LARGE SCALE MRNA] OF 32-124</scope>
    <source>
        <strain>cv. Nipponbare</strain>
    </source>
</reference>
<reference key="5">
    <citation type="journal article" date="2008" name="J. Integr. Plant Biol.">
        <title>Phylogenetic analysis of the plant-specific zinc finger-homeobox and mini zinc finger gene families.</title>
        <authorList>
            <person name="Hu W."/>
            <person name="dePamphilis C.W."/>
            <person name="Ma H."/>
        </authorList>
    </citation>
    <scope>GENE FAMILY</scope>
    <scope>NOMENCLATURE</scope>
</reference>
<proteinExistence type="evidence at transcript level"/>
<accession>Q0J5F8</accession>